<protein>
    <recommendedName>
        <fullName evidence="1">Large ribosomal subunit protein bL27</fullName>
    </recommendedName>
    <alternativeName>
        <fullName evidence="3">50S ribosomal protein L27</fullName>
    </alternativeName>
</protein>
<name>RL27_COLP3</name>
<keyword id="KW-0687">Ribonucleoprotein</keyword>
<keyword id="KW-0689">Ribosomal protein</keyword>
<accession>Q47VL3</accession>
<sequence>MAHKKAAGSTRNGRDSEAKRLGVKRFGGESVLAGNIIVRQRGTRFHAGSNMGIGKDHTLFALSDGKVQFEVKGPKSRKFVSIIAD</sequence>
<evidence type="ECO:0000255" key="1">
    <source>
        <dbReference type="HAMAP-Rule" id="MF_00539"/>
    </source>
</evidence>
<evidence type="ECO:0000256" key="2">
    <source>
        <dbReference type="SAM" id="MobiDB-lite"/>
    </source>
</evidence>
<evidence type="ECO:0000305" key="3"/>
<reference key="1">
    <citation type="journal article" date="2005" name="Proc. Natl. Acad. Sci. U.S.A.">
        <title>The psychrophilic lifestyle as revealed by the genome sequence of Colwellia psychrerythraea 34H through genomic and proteomic analyses.</title>
        <authorList>
            <person name="Methe B.A."/>
            <person name="Nelson K.E."/>
            <person name="Deming J.W."/>
            <person name="Momen B."/>
            <person name="Melamud E."/>
            <person name="Zhang X."/>
            <person name="Moult J."/>
            <person name="Madupu R."/>
            <person name="Nelson W.C."/>
            <person name="Dodson R.J."/>
            <person name="Brinkac L.M."/>
            <person name="Daugherty S.C."/>
            <person name="Durkin A.S."/>
            <person name="DeBoy R.T."/>
            <person name="Kolonay J.F."/>
            <person name="Sullivan S.A."/>
            <person name="Zhou L."/>
            <person name="Davidsen T.M."/>
            <person name="Wu M."/>
            <person name="Huston A.L."/>
            <person name="Lewis M."/>
            <person name="Weaver B."/>
            <person name="Weidman J.F."/>
            <person name="Khouri H."/>
            <person name="Utterback T.R."/>
            <person name="Feldblyum T.V."/>
            <person name="Fraser C.M."/>
        </authorList>
    </citation>
    <scope>NUCLEOTIDE SEQUENCE [LARGE SCALE GENOMIC DNA]</scope>
    <source>
        <strain>34H / ATCC BAA-681</strain>
    </source>
</reference>
<organism>
    <name type="scientific">Colwellia psychrerythraea (strain 34H / ATCC BAA-681)</name>
    <name type="common">Vibrio psychroerythus</name>
    <dbReference type="NCBI Taxonomy" id="167879"/>
    <lineage>
        <taxon>Bacteria</taxon>
        <taxon>Pseudomonadati</taxon>
        <taxon>Pseudomonadota</taxon>
        <taxon>Gammaproteobacteria</taxon>
        <taxon>Alteromonadales</taxon>
        <taxon>Colwelliaceae</taxon>
        <taxon>Colwellia</taxon>
    </lineage>
</organism>
<dbReference type="EMBL" id="CP000083">
    <property type="protein sequence ID" value="AAZ28263.1"/>
    <property type="molecule type" value="Genomic_DNA"/>
</dbReference>
<dbReference type="RefSeq" id="WP_011045240.1">
    <property type="nucleotide sequence ID" value="NC_003910.7"/>
</dbReference>
<dbReference type="SMR" id="Q47VL3"/>
<dbReference type="STRING" id="167879.CPS_4511"/>
<dbReference type="KEGG" id="cps:CPS_4511"/>
<dbReference type="eggNOG" id="COG0211">
    <property type="taxonomic scope" value="Bacteria"/>
</dbReference>
<dbReference type="HOGENOM" id="CLU_095424_4_1_6"/>
<dbReference type="Proteomes" id="UP000000547">
    <property type="component" value="Chromosome"/>
</dbReference>
<dbReference type="GO" id="GO:0022625">
    <property type="term" value="C:cytosolic large ribosomal subunit"/>
    <property type="evidence" value="ECO:0007669"/>
    <property type="project" value="TreeGrafter"/>
</dbReference>
<dbReference type="GO" id="GO:0003735">
    <property type="term" value="F:structural constituent of ribosome"/>
    <property type="evidence" value="ECO:0007669"/>
    <property type="project" value="InterPro"/>
</dbReference>
<dbReference type="GO" id="GO:0006412">
    <property type="term" value="P:translation"/>
    <property type="evidence" value="ECO:0007669"/>
    <property type="project" value="UniProtKB-UniRule"/>
</dbReference>
<dbReference type="FunFam" id="2.40.50.100:FF:000001">
    <property type="entry name" value="50S ribosomal protein L27"/>
    <property type="match status" value="1"/>
</dbReference>
<dbReference type="Gene3D" id="2.40.50.100">
    <property type="match status" value="1"/>
</dbReference>
<dbReference type="HAMAP" id="MF_00539">
    <property type="entry name" value="Ribosomal_bL27"/>
    <property type="match status" value="1"/>
</dbReference>
<dbReference type="InterPro" id="IPR001684">
    <property type="entry name" value="Ribosomal_bL27"/>
</dbReference>
<dbReference type="InterPro" id="IPR018261">
    <property type="entry name" value="Ribosomal_bL27_CS"/>
</dbReference>
<dbReference type="NCBIfam" id="TIGR00062">
    <property type="entry name" value="L27"/>
    <property type="match status" value="1"/>
</dbReference>
<dbReference type="PANTHER" id="PTHR15893:SF0">
    <property type="entry name" value="LARGE RIBOSOMAL SUBUNIT PROTEIN BL27M"/>
    <property type="match status" value="1"/>
</dbReference>
<dbReference type="PANTHER" id="PTHR15893">
    <property type="entry name" value="RIBOSOMAL PROTEIN L27"/>
    <property type="match status" value="1"/>
</dbReference>
<dbReference type="Pfam" id="PF01016">
    <property type="entry name" value="Ribosomal_L27"/>
    <property type="match status" value="1"/>
</dbReference>
<dbReference type="PRINTS" id="PR00063">
    <property type="entry name" value="RIBOSOMALL27"/>
</dbReference>
<dbReference type="SUPFAM" id="SSF110324">
    <property type="entry name" value="Ribosomal L27 protein-like"/>
    <property type="match status" value="1"/>
</dbReference>
<dbReference type="PROSITE" id="PS00831">
    <property type="entry name" value="RIBOSOMAL_L27"/>
    <property type="match status" value="1"/>
</dbReference>
<feature type="chain" id="PRO_1000017459" description="Large ribosomal subunit protein bL27">
    <location>
        <begin position="1"/>
        <end position="85"/>
    </location>
</feature>
<feature type="region of interest" description="Disordered" evidence="2">
    <location>
        <begin position="1"/>
        <end position="20"/>
    </location>
</feature>
<comment type="similarity">
    <text evidence="1">Belongs to the bacterial ribosomal protein bL27 family.</text>
</comment>
<proteinExistence type="inferred from homology"/>
<gene>
    <name evidence="1" type="primary">rpmA</name>
    <name type="ordered locus">CPS_4511</name>
</gene>